<keyword id="KW-0407">Ion channel</keyword>
<keyword id="KW-0406">Ion transport</keyword>
<keyword id="KW-0472">Membrane</keyword>
<keyword id="KW-1185">Reference proteome</keyword>
<keyword id="KW-0812">Transmembrane</keyword>
<keyword id="KW-1133">Transmembrane helix</keyword>
<keyword id="KW-0813">Transport</keyword>
<reference key="1">
    <citation type="journal article" date="1999" name="Nature">
        <title>Sequence and analysis of chromosome 4 of the plant Arabidopsis thaliana.</title>
        <authorList>
            <person name="Mayer K.F.X."/>
            <person name="Schueller C."/>
            <person name="Wambutt R."/>
            <person name="Murphy G."/>
            <person name="Volckaert G."/>
            <person name="Pohl T."/>
            <person name="Duesterhoeft A."/>
            <person name="Stiekema W."/>
            <person name="Entian K.-D."/>
            <person name="Terryn N."/>
            <person name="Harris B."/>
            <person name="Ansorge W."/>
            <person name="Brandt P."/>
            <person name="Grivell L.A."/>
            <person name="Rieger M."/>
            <person name="Weichselgartner M."/>
            <person name="de Simone V."/>
            <person name="Obermaier B."/>
            <person name="Mache R."/>
            <person name="Mueller M."/>
            <person name="Kreis M."/>
            <person name="Delseny M."/>
            <person name="Puigdomenech P."/>
            <person name="Watson M."/>
            <person name="Schmidtheini T."/>
            <person name="Reichert B."/>
            <person name="Portetelle D."/>
            <person name="Perez-Alonso M."/>
            <person name="Boutry M."/>
            <person name="Bancroft I."/>
            <person name="Vos P."/>
            <person name="Hoheisel J."/>
            <person name="Zimmermann W."/>
            <person name="Wedler H."/>
            <person name="Ridley P."/>
            <person name="Langham S.-A."/>
            <person name="McCullagh B."/>
            <person name="Bilham L."/>
            <person name="Robben J."/>
            <person name="van der Schueren J."/>
            <person name="Grymonprez B."/>
            <person name="Chuang Y.-J."/>
            <person name="Vandenbussche F."/>
            <person name="Braeken M."/>
            <person name="Weltjens I."/>
            <person name="Voet M."/>
            <person name="Bastiaens I."/>
            <person name="Aert R."/>
            <person name="Defoor E."/>
            <person name="Weitzenegger T."/>
            <person name="Bothe G."/>
            <person name="Ramsperger U."/>
            <person name="Hilbert H."/>
            <person name="Braun M."/>
            <person name="Holzer E."/>
            <person name="Brandt A."/>
            <person name="Peters S."/>
            <person name="van Staveren M."/>
            <person name="Dirkse W."/>
            <person name="Mooijman P."/>
            <person name="Klein Lankhorst R."/>
            <person name="Rose M."/>
            <person name="Hauf J."/>
            <person name="Koetter P."/>
            <person name="Berneiser S."/>
            <person name="Hempel S."/>
            <person name="Feldpausch M."/>
            <person name="Lamberth S."/>
            <person name="Van den Daele H."/>
            <person name="De Keyser A."/>
            <person name="Buysshaert C."/>
            <person name="Gielen J."/>
            <person name="Villarroel R."/>
            <person name="De Clercq R."/>
            <person name="van Montagu M."/>
            <person name="Rogers J."/>
            <person name="Cronin A."/>
            <person name="Quail M.A."/>
            <person name="Bray-Allen S."/>
            <person name="Clark L."/>
            <person name="Doggett J."/>
            <person name="Hall S."/>
            <person name="Kay M."/>
            <person name="Lennard N."/>
            <person name="McLay K."/>
            <person name="Mayes R."/>
            <person name="Pettett A."/>
            <person name="Rajandream M.A."/>
            <person name="Lyne M."/>
            <person name="Benes V."/>
            <person name="Rechmann S."/>
            <person name="Borkova D."/>
            <person name="Bloecker H."/>
            <person name="Scharfe M."/>
            <person name="Grimm M."/>
            <person name="Loehnert T.-H."/>
            <person name="Dose S."/>
            <person name="de Haan M."/>
            <person name="Maarse A.C."/>
            <person name="Schaefer M."/>
            <person name="Mueller-Auer S."/>
            <person name="Gabel C."/>
            <person name="Fuchs M."/>
            <person name="Fartmann B."/>
            <person name="Granderath K."/>
            <person name="Dauner D."/>
            <person name="Herzl A."/>
            <person name="Neumann S."/>
            <person name="Argiriou A."/>
            <person name="Vitale D."/>
            <person name="Liguori R."/>
            <person name="Piravandi E."/>
            <person name="Massenet O."/>
            <person name="Quigley F."/>
            <person name="Clabauld G."/>
            <person name="Muendlein A."/>
            <person name="Felber R."/>
            <person name="Schnabl S."/>
            <person name="Hiller R."/>
            <person name="Schmidt W."/>
            <person name="Lecharny A."/>
            <person name="Aubourg S."/>
            <person name="Chefdor F."/>
            <person name="Cooke R."/>
            <person name="Berger C."/>
            <person name="Monfort A."/>
            <person name="Casacuberta E."/>
            <person name="Gibbons T."/>
            <person name="Weber N."/>
            <person name="Vandenbol M."/>
            <person name="Bargues M."/>
            <person name="Terol J."/>
            <person name="Torres A."/>
            <person name="Perez-Perez A."/>
            <person name="Purnelle B."/>
            <person name="Bent E."/>
            <person name="Johnson S."/>
            <person name="Tacon D."/>
            <person name="Jesse T."/>
            <person name="Heijnen L."/>
            <person name="Schwarz S."/>
            <person name="Scholler P."/>
            <person name="Heber S."/>
            <person name="Francs P."/>
            <person name="Bielke C."/>
            <person name="Frishman D."/>
            <person name="Haase D."/>
            <person name="Lemcke K."/>
            <person name="Mewes H.-W."/>
            <person name="Stocker S."/>
            <person name="Zaccaria P."/>
            <person name="Bevan M."/>
            <person name="Wilson R.K."/>
            <person name="de la Bastide M."/>
            <person name="Habermann K."/>
            <person name="Parnell L."/>
            <person name="Dedhia N."/>
            <person name="Gnoj L."/>
            <person name="Schutz K."/>
            <person name="Huang E."/>
            <person name="Spiegel L."/>
            <person name="Sekhon M."/>
            <person name="Murray J."/>
            <person name="Sheet P."/>
            <person name="Cordes M."/>
            <person name="Abu-Threideh J."/>
            <person name="Stoneking T."/>
            <person name="Kalicki J."/>
            <person name="Graves T."/>
            <person name="Harmon G."/>
            <person name="Edwards J."/>
            <person name="Latreille P."/>
            <person name="Courtney L."/>
            <person name="Cloud J."/>
            <person name="Abbott A."/>
            <person name="Scott K."/>
            <person name="Johnson D."/>
            <person name="Minx P."/>
            <person name="Bentley D."/>
            <person name="Fulton B."/>
            <person name="Miller N."/>
            <person name="Greco T."/>
            <person name="Kemp K."/>
            <person name="Kramer J."/>
            <person name="Fulton L."/>
            <person name="Mardis E."/>
            <person name="Dante M."/>
            <person name="Pepin K."/>
            <person name="Hillier L.W."/>
            <person name="Nelson J."/>
            <person name="Spieth J."/>
            <person name="Ryan E."/>
            <person name="Andrews S."/>
            <person name="Geisel C."/>
            <person name="Layman D."/>
            <person name="Du H."/>
            <person name="Ali J."/>
            <person name="Berghoff A."/>
            <person name="Jones K."/>
            <person name="Drone K."/>
            <person name="Cotton M."/>
            <person name="Joshu C."/>
            <person name="Antonoiu B."/>
            <person name="Zidanic M."/>
            <person name="Strong C."/>
            <person name="Sun H."/>
            <person name="Lamar B."/>
            <person name="Yordan C."/>
            <person name="Ma P."/>
            <person name="Zhong J."/>
            <person name="Preston R."/>
            <person name="Vil D."/>
            <person name="Shekher M."/>
            <person name="Matero A."/>
            <person name="Shah R."/>
            <person name="Swaby I.K."/>
            <person name="O'Shaughnessy A."/>
            <person name="Rodriguez M."/>
            <person name="Hoffman J."/>
            <person name="Till S."/>
            <person name="Granat S."/>
            <person name="Shohdy N."/>
            <person name="Hasegawa A."/>
            <person name="Hameed A."/>
            <person name="Lodhi M."/>
            <person name="Johnson A."/>
            <person name="Chen E."/>
            <person name="Marra M.A."/>
            <person name="Martienssen R."/>
            <person name="McCombie W.R."/>
        </authorList>
    </citation>
    <scope>NUCLEOTIDE SEQUENCE [LARGE SCALE GENOMIC DNA]</scope>
    <source>
        <strain>cv. Columbia</strain>
    </source>
</reference>
<reference key="2">
    <citation type="journal article" date="2017" name="Plant J.">
        <title>Araport11: a complete reannotation of the Arabidopsis thaliana reference genome.</title>
        <authorList>
            <person name="Cheng C.Y."/>
            <person name="Krishnakumar V."/>
            <person name="Chan A.P."/>
            <person name="Thibaud-Nissen F."/>
            <person name="Schobel S."/>
            <person name="Town C.D."/>
        </authorList>
    </citation>
    <scope>GENOME REANNOTATION</scope>
    <source>
        <strain>cv. Columbia</strain>
    </source>
</reference>
<reference key="3">
    <citation type="journal article" date="2006" name="Proc. Natl. Acad. Sci. U.S.A.">
        <title>AtALMT1, which encodes a malate transporter, is identified as one of several genes critical for aluminum tolerance in Arabidopsis.</title>
        <authorList>
            <person name="Hoekenga O.A."/>
            <person name="Maron L.G."/>
            <person name="Pineros M.A."/>
            <person name="Cancado G.M."/>
            <person name="Shaff J."/>
            <person name="Kobayashi Y."/>
            <person name="Ryan P.R."/>
            <person name="Dong B."/>
            <person name="Delhaize E."/>
            <person name="Sasaki T."/>
            <person name="Matsumoto H."/>
            <person name="Yamamoto Y."/>
            <person name="Koyama H."/>
            <person name="Kochian L.V."/>
        </authorList>
    </citation>
    <scope>GENE FAMILY</scope>
    <scope>NOMENCLATURE</scope>
</reference>
<dbReference type="EMBL" id="AF013294">
    <property type="protein sequence ID" value="AAB62849.1"/>
    <property type="status" value="ALT_SEQ"/>
    <property type="molecule type" value="Genomic_DNA"/>
</dbReference>
<dbReference type="EMBL" id="AL161472">
    <property type="protein sequence ID" value="CAB80900.1"/>
    <property type="status" value="ALT_SEQ"/>
    <property type="molecule type" value="Genomic_DNA"/>
</dbReference>
<dbReference type="EMBL" id="CP002687">
    <property type="status" value="NOT_ANNOTATED_CDS"/>
    <property type="molecule type" value="Genomic_DNA"/>
</dbReference>
<dbReference type="PIR" id="T01555">
    <property type="entry name" value="T01555"/>
</dbReference>
<dbReference type="SMR" id="O23086"/>
<dbReference type="STRING" id="3702.O23086"/>
<dbReference type="PaxDb" id="3702-AT4G00910.1"/>
<dbReference type="Araport" id="AT4G00910"/>
<dbReference type="TAIR" id="AT4G00910"/>
<dbReference type="eggNOG" id="KOG4711">
    <property type="taxonomic scope" value="Eukaryota"/>
</dbReference>
<dbReference type="HOGENOM" id="CLU_020841_2_1_1"/>
<dbReference type="InParanoid" id="O23086"/>
<dbReference type="PRO" id="PR:O23086"/>
<dbReference type="Proteomes" id="UP000006548">
    <property type="component" value="Chromosome 4"/>
</dbReference>
<dbReference type="ExpressionAtlas" id="O23086">
    <property type="expression patterns" value="baseline and differential"/>
</dbReference>
<dbReference type="GO" id="GO:0009705">
    <property type="term" value="C:plant-type vacuole membrane"/>
    <property type="evidence" value="ECO:0000318"/>
    <property type="project" value="GO_Central"/>
</dbReference>
<dbReference type="GO" id="GO:0015743">
    <property type="term" value="P:malate transport"/>
    <property type="evidence" value="ECO:0007669"/>
    <property type="project" value="InterPro"/>
</dbReference>
<dbReference type="GO" id="GO:0034220">
    <property type="term" value="P:monoatomic ion transmembrane transport"/>
    <property type="evidence" value="ECO:0007669"/>
    <property type="project" value="UniProtKB-KW"/>
</dbReference>
<dbReference type="InterPro" id="IPR020966">
    <property type="entry name" value="ALMT"/>
</dbReference>
<dbReference type="PANTHER" id="PTHR31086">
    <property type="entry name" value="ALUMINUM-ACTIVATED MALATE TRANSPORTER 10"/>
    <property type="match status" value="1"/>
</dbReference>
<dbReference type="Pfam" id="PF11744">
    <property type="entry name" value="ALMT"/>
    <property type="match status" value="2"/>
</dbReference>
<gene>
    <name type="primary">ALMT10</name>
    <name type="ordered locus">At4g00910</name>
    <name type="ORF">A_TM018A10.3</name>
    <name type="ORF">T18A10.21</name>
</gene>
<organism>
    <name type="scientific">Arabidopsis thaliana</name>
    <name type="common">Mouse-ear cress</name>
    <dbReference type="NCBI Taxonomy" id="3702"/>
    <lineage>
        <taxon>Eukaryota</taxon>
        <taxon>Viridiplantae</taxon>
        <taxon>Streptophyta</taxon>
        <taxon>Embryophyta</taxon>
        <taxon>Tracheophyta</taxon>
        <taxon>Spermatophyta</taxon>
        <taxon>Magnoliopsida</taxon>
        <taxon>eudicotyledons</taxon>
        <taxon>Gunneridae</taxon>
        <taxon>Pentapetalae</taxon>
        <taxon>rosids</taxon>
        <taxon>malvids</taxon>
        <taxon>Brassicales</taxon>
        <taxon>Brassicaceae</taxon>
        <taxon>Camelineae</taxon>
        <taxon>Arabidopsis</taxon>
    </lineage>
</organism>
<comment type="function">
    <text evidence="1">Malate transporter.</text>
</comment>
<comment type="subcellular location">
    <subcellularLocation>
        <location evidence="4">Membrane</location>
        <topology evidence="4">Multi-pass membrane protein</topology>
    </subcellularLocation>
</comment>
<comment type="similarity">
    <text evidence="4">Belongs to the aromatic acid exporter (TC 2.A.85) family.</text>
</comment>
<comment type="sequence caution" evidence="4">
    <conflict type="erroneous gene model prediction">
        <sequence resource="EMBL-CDS" id="AAB62849"/>
    </conflict>
</comment>
<comment type="sequence caution" evidence="4">
    <conflict type="erroneous gene model prediction">
        <sequence resource="EMBL-CDS" id="CAB80900"/>
    </conflict>
</comment>
<sequence length="497" mass="55516">MATQEAGKLEWRISVDNGTTERLVPRSGLSKRIFLWLKDLVMKVIMERVAKFMRKAWRIGADDPAKVVHCLKVGLALSLVSIFYYMRPLYDGVGGNAMWAIMTVVVVFESNVGATFCKCVNRVVATILAGSLGIAVHWVATQSGKAEVFVIGCSVFLFAFAATYSRFVPSFKARFDYGAMIFILTFSLVSVGGYRVDKLVELAQQRVSTIAIGTSICIIITVFFCPIWAGSQLHRLIERNLEKLADSLDGCVAEYFKENEVSTNRNEDENTNMKLQGFKCVLNSKGTEEAMPLIRFSGFSFSQANLARWEPAHGSFNFRHPWKLYVKIGAAMRRCAYCLENLSICINYETEAPDQVKNHFGEACMKLSSASSKILRELADMMKNTRKSSKMDFLVFDMNSAVQELQETLKNVPIETNKPEEVPSEEENKVDSEERTTSMSLHEVLPVATLVSLLIENAARIQTAVEAVDELANLADFEQDSKKKTGDNNTKQPPLSS</sequence>
<evidence type="ECO:0000250" key="1"/>
<evidence type="ECO:0000255" key="2"/>
<evidence type="ECO:0000256" key="3">
    <source>
        <dbReference type="SAM" id="MobiDB-lite"/>
    </source>
</evidence>
<evidence type="ECO:0000305" key="4"/>
<feature type="chain" id="PRO_0000401469" description="Aluminum-activated malate transporter 10">
    <location>
        <begin position="1"/>
        <end position="497"/>
    </location>
</feature>
<feature type="transmembrane region" description="Helical" evidence="2">
    <location>
        <begin position="66"/>
        <end position="86"/>
    </location>
</feature>
<feature type="transmembrane region" description="Helical" evidence="2">
    <location>
        <begin position="88"/>
        <end position="108"/>
    </location>
</feature>
<feature type="transmembrane region" description="Helical" evidence="2">
    <location>
        <begin position="123"/>
        <end position="143"/>
    </location>
</feature>
<feature type="transmembrane region" description="Helical" evidence="2">
    <location>
        <begin position="148"/>
        <end position="168"/>
    </location>
</feature>
<feature type="transmembrane region" description="Helical" evidence="2">
    <location>
        <begin position="173"/>
        <end position="193"/>
    </location>
</feature>
<feature type="transmembrane region" description="Helical" evidence="2">
    <location>
        <begin position="210"/>
        <end position="230"/>
    </location>
</feature>
<feature type="region of interest" description="Disordered" evidence="3">
    <location>
        <begin position="413"/>
        <end position="437"/>
    </location>
</feature>
<feature type="region of interest" description="Disordered" evidence="3">
    <location>
        <begin position="476"/>
        <end position="497"/>
    </location>
</feature>
<feature type="compositionally biased region" description="Basic and acidic residues" evidence="3">
    <location>
        <begin position="417"/>
        <end position="436"/>
    </location>
</feature>
<feature type="compositionally biased region" description="Polar residues" evidence="3">
    <location>
        <begin position="487"/>
        <end position="497"/>
    </location>
</feature>
<proteinExistence type="inferred from homology"/>
<name>ALMTA_ARATH</name>
<protein>
    <recommendedName>
        <fullName>Aluminum-activated malate transporter 10</fullName>
        <shortName>AtALMT10</shortName>
    </recommendedName>
</protein>
<accession>O23086</accession>